<feature type="chain" id="PRO_1000127418" description="Large ribosomal subunit protein bL35">
    <location>
        <begin position="1"/>
        <end position="67"/>
    </location>
</feature>
<protein>
    <recommendedName>
        <fullName evidence="1">Large ribosomal subunit protein bL35</fullName>
    </recommendedName>
    <alternativeName>
        <fullName evidence="2">50S ribosomal protein L35</fullName>
    </alternativeName>
</protein>
<proteinExistence type="inferred from homology"/>
<name>RL35_PICP2</name>
<keyword id="KW-1185">Reference proteome</keyword>
<keyword id="KW-0687">Ribonucleoprotein</keyword>
<keyword id="KW-0689">Ribosomal protein</keyword>
<accession>B1XIR0</accession>
<gene>
    <name evidence="1" type="primary">rpmI</name>
    <name evidence="1" type="synonym">rpl35</name>
    <name type="ordered locus">SYNPCC7002_A2181</name>
</gene>
<comment type="similarity">
    <text evidence="1">Belongs to the bacterial ribosomal protein bL35 family.</text>
</comment>
<evidence type="ECO:0000255" key="1">
    <source>
        <dbReference type="HAMAP-Rule" id="MF_00514"/>
    </source>
</evidence>
<evidence type="ECO:0000305" key="2"/>
<organism>
    <name type="scientific">Picosynechococcus sp. (strain ATCC 27264 / PCC 7002 / PR-6)</name>
    <name type="common">Agmenellum quadruplicatum</name>
    <dbReference type="NCBI Taxonomy" id="32049"/>
    <lineage>
        <taxon>Bacteria</taxon>
        <taxon>Bacillati</taxon>
        <taxon>Cyanobacteriota</taxon>
        <taxon>Cyanophyceae</taxon>
        <taxon>Oscillatoriophycideae</taxon>
        <taxon>Chroococcales</taxon>
        <taxon>Geminocystaceae</taxon>
        <taxon>Picosynechococcus</taxon>
    </lineage>
</organism>
<sequence>MPKLKTRRAAAKRFKLTGSGKKIARRKAFKNHLLNHKSAEQKRRRLSGMALVDKSDEKNVRLMLPYA</sequence>
<dbReference type="EMBL" id="CP000951">
    <property type="protein sequence ID" value="ACB00162.1"/>
    <property type="molecule type" value="Genomic_DNA"/>
</dbReference>
<dbReference type="RefSeq" id="WP_012307781.1">
    <property type="nucleotide sequence ID" value="NZ_JAHHPU010000010.1"/>
</dbReference>
<dbReference type="SMR" id="B1XIR0"/>
<dbReference type="STRING" id="32049.SYNPCC7002_A2181"/>
<dbReference type="KEGG" id="syp:SYNPCC7002_A2181"/>
<dbReference type="eggNOG" id="COG0291">
    <property type="taxonomic scope" value="Bacteria"/>
</dbReference>
<dbReference type="HOGENOM" id="CLU_169643_4_0_3"/>
<dbReference type="Proteomes" id="UP000001688">
    <property type="component" value="Chromosome"/>
</dbReference>
<dbReference type="GO" id="GO:0022625">
    <property type="term" value="C:cytosolic large ribosomal subunit"/>
    <property type="evidence" value="ECO:0007669"/>
    <property type="project" value="TreeGrafter"/>
</dbReference>
<dbReference type="GO" id="GO:0003735">
    <property type="term" value="F:structural constituent of ribosome"/>
    <property type="evidence" value="ECO:0007669"/>
    <property type="project" value="InterPro"/>
</dbReference>
<dbReference type="GO" id="GO:0006412">
    <property type="term" value="P:translation"/>
    <property type="evidence" value="ECO:0007669"/>
    <property type="project" value="UniProtKB-UniRule"/>
</dbReference>
<dbReference type="FunFam" id="4.10.410.60:FF:000001">
    <property type="entry name" value="50S ribosomal protein L35"/>
    <property type="match status" value="1"/>
</dbReference>
<dbReference type="Gene3D" id="4.10.410.60">
    <property type="match status" value="1"/>
</dbReference>
<dbReference type="HAMAP" id="MF_00514">
    <property type="entry name" value="Ribosomal_bL35"/>
    <property type="match status" value="1"/>
</dbReference>
<dbReference type="InterPro" id="IPR001706">
    <property type="entry name" value="Ribosomal_bL35"/>
</dbReference>
<dbReference type="InterPro" id="IPR021137">
    <property type="entry name" value="Ribosomal_bL35-like"/>
</dbReference>
<dbReference type="InterPro" id="IPR018265">
    <property type="entry name" value="Ribosomal_bL35_CS"/>
</dbReference>
<dbReference type="InterPro" id="IPR037229">
    <property type="entry name" value="Ribosomal_bL35_sf"/>
</dbReference>
<dbReference type="NCBIfam" id="TIGR00001">
    <property type="entry name" value="rpmI_bact"/>
    <property type="match status" value="1"/>
</dbReference>
<dbReference type="PANTHER" id="PTHR33343">
    <property type="entry name" value="54S RIBOSOMAL PROTEIN BL35M"/>
    <property type="match status" value="1"/>
</dbReference>
<dbReference type="PANTHER" id="PTHR33343:SF1">
    <property type="entry name" value="LARGE RIBOSOMAL SUBUNIT PROTEIN BL35M"/>
    <property type="match status" value="1"/>
</dbReference>
<dbReference type="Pfam" id="PF01632">
    <property type="entry name" value="Ribosomal_L35p"/>
    <property type="match status" value="1"/>
</dbReference>
<dbReference type="PRINTS" id="PR00064">
    <property type="entry name" value="RIBOSOMALL35"/>
</dbReference>
<dbReference type="SUPFAM" id="SSF143034">
    <property type="entry name" value="L35p-like"/>
    <property type="match status" value="1"/>
</dbReference>
<dbReference type="PROSITE" id="PS00936">
    <property type="entry name" value="RIBOSOMAL_L35"/>
    <property type="match status" value="1"/>
</dbReference>
<reference key="1">
    <citation type="submission" date="2008-02" db="EMBL/GenBank/DDBJ databases">
        <title>Complete sequence of Synechococcus sp. PCC 7002.</title>
        <authorList>
            <person name="Li T."/>
            <person name="Zhao J."/>
            <person name="Zhao C."/>
            <person name="Liu Z."/>
            <person name="Zhao F."/>
            <person name="Marquardt J."/>
            <person name="Nomura C.T."/>
            <person name="Persson S."/>
            <person name="Detter J.C."/>
            <person name="Richardson P.M."/>
            <person name="Lanz C."/>
            <person name="Schuster S.C."/>
            <person name="Wang J."/>
            <person name="Li S."/>
            <person name="Huang X."/>
            <person name="Cai T."/>
            <person name="Yu Z."/>
            <person name="Luo J."/>
            <person name="Zhao J."/>
            <person name="Bryant D.A."/>
        </authorList>
    </citation>
    <scope>NUCLEOTIDE SEQUENCE [LARGE SCALE GENOMIC DNA]</scope>
    <source>
        <strain>ATCC 27264 / PCC 7002 / PR-6</strain>
    </source>
</reference>